<gene>
    <name evidence="1" type="primary">aroA</name>
    <name type="ordered locus">Ping_1117</name>
</gene>
<reference key="1">
    <citation type="journal article" date="2008" name="BMC Genomics">
        <title>Genomics of an extreme psychrophile, Psychromonas ingrahamii.</title>
        <authorList>
            <person name="Riley M."/>
            <person name="Staley J.T."/>
            <person name="Danchin A."/>
            <person name="Wang T.Z."/>
            <person name="Brettin T.S."/>
            <person name="Hauser L.J."/>
            <person name="Land M.L."/>
            <person name="Thompson L.S."/>
        </authorList>
    </citation>
    <scope>NUCLEOTIDE SEQUENCE [LARGE SCALE GENOMIC DNA]</scope>
    <source>
        <strain>DSM 17664 / CCUG 51855 / 37</strain>
    </source>
</reference>
<name>AROA_PSYIN</name>
<evidence type="ECO:0000255" key="1">
    <source>
        <dbReference type="HAMAP-Rule" id="MF_00210"/>
    </source>
</evidence>
<keyword id="KW-0028">Amino-acid biosynthesis</keyword>
<keyword id="KW-0057">Aromatic amino acid biosynthesis</keyword>
<keyword id="KW-0963">Cytoplasm</keyword>
<keyword id="KW-1185">Reference proteome</keyword>
<keyword id="KW-0808">Transferase</keyword>
<dbReference type="EC" id="2.5.1.19" evidence="1"/>
<dbReference type="EMBL" id="CP000510">
    <property type="protein sequence ID" value="ABM02955.1"/>
    <property type="molecule type" value="Genomic_DNA"/>
</dbReference>
<dbReference type="RefSeq" id="WP_011769518.1">
    <property type="nucleotide sequence ID" value="NC_008709.1"/>
</dbReference>
<dbReference type="SMR" id="A1STZ0"/>
<dbReference type="STRING" id="357804.Ping_1117"/>
<dbReference type="KEGG" id="pin:Ping_1117"/>
<dbReference type="eggNOG" id="COG0128">
    <property type="taxonomic scope" value="Bacteria"/>
</dbReference>
<dbReference type="HOGENOM" id="CLU_024321_0_0_6"/>
<dbReference type="OrthoDB" id="9809920at2"/>
<dbReference type="UniPathway" id="UPA00053">
    <property type="reaction ID" value="UER00089"/>
</dbReference>
<dbReference type="Proteomes" id="UP000000639">
    <property type="component" value="Chromosome"/>
</dbReference>
<dbReference type="GO" id="GO:0005737">
    <property type="term" value="C:cytoplasm"/>
    <property type="evidence" value="ECO:0007669"/>
    <property type="project" value="UniProtKB-SubCell"/>
</dbReference>
<dbReference type="GO" id="GO:0003866">
    <property type="term" value="F:3-phosphoshikimate 1-carboxyvinyltransferase activity"/>
    <property type="evidence" value="ECO:0007669"/>
    <property type="project" value="UniProtKB-UniRule"/>
</dbReference>
<dbReference type="GO" id="GO:0008652">
    <property type="term" value="P:amino acid biosynthetic process"/>
    <property type="evidence" value="ECO:0007669"/>
    <property type="project" value="UniProtKB-KW"/>
</dbReference>
<dbReference type="GO" id="GO:0009073">
    <property type="term" value="P:aromatic amino acid family biosynthetic process"/>
    <property type="evidence" value="ECO:0007669"/>
    <property type="project" value="UniProtKB-KW"/>
</dbReference>
<dbReference type="GO" id="GO:0009423">
    <property type="term" value="P:chorismate biosynthetic process"/>
    <property type="evidence" value="ECO:0007669"/>
    <property type="project" value="UniProtKB-UniRule"/>
</dbReference>
<dbReference type="CDD" id="cd01556">
    <property type="entry name" value="EPSP_synthase"/>
    <property type="match status" value="1"/>
</dbReference>
<dbReference type="FunFam" id="3.65.10.10:FF:000003">
    <property type="entry name" value="3-phosphoshikimate 1-carboxyvinyltransferase"/>
    <property type="match status" value="1"/>
</dbReference>
<dbReference type="FunFam" id="3.65.10.10:FF:000004">
    <property type="entry name" value="3-phosphoshikimate 1-carboxyvinyltransferase"/>
    <property type="match status" value="1"/>
</dbReference>
<dbReference type="Gene3D" id="3.65.10.10">
    <property type="entry name" value="Enolpyruvate transferase domain"/>
    <property type="match status" value="2"/>
</dbReference>
<dbReference type="HAMAP" id="MF_00210">
    <property type="entry name" value="EPSP_synth"/>
    <property type="match status" value="1"/>
</dbReference>
<dbReference type="InterPro" id="IPR001986">
    <property type="entry name" value="Enolpyruvate_Tfrase_dom"/>
</dbReference>
<dbReference type="InterPro" id="IPR036968">
    <property type="entry name" value="Enolpyruvate_Tfrase_sf"/>
</dbReference>
<dbReference type="InterPro" id="IPR006264">
    <property type="entry name" value="EPSP_synthase"/>
</dbReference>
<dbReference type="InterPro" id="IPR023193">
    <property type="entry name" value="EPSP_synthase_CS"/>
</dbReference>
<dbReference type="InterPro" id="IPR013792">
    <property type="entry name" value="RNA3'P_cycl/enolpyr_Trfase_a/b"/>
</dbReference>
<dbReference type="NCBIfam" id="TIGR01356">
    <property type="entry name" value="aroA"/>
    <property type="match status" value="1"/>
</dbReference>
<dbReference type="PANTHER" id="PTHR21090">
    <property type="entry name" value="AROM/DEHYDROQUINATE SYNTHASE"/>
    <property type="match status" value="1"/>
</dbReference>
<dbReference type="PANTHER" id="PTHR21090:SF5">
    <property type="entry name" value="PENTAFUNCTIONAL AROM POLYPEPTIDE"/>
    <property type="match status" value="1"/>
</dbReference>
<dbReference type="Pfam" id="PF00275">
    <property type="entry name" value="EPSP_synthase"/>
    <property type="match status" value="1"/>
</dbReference>
<dbReference type="PIRSF" id="PIRSF000505">
    <property type="entry name" value="EPSPS"/>
    <property type="match status" value="1"/>
</dbReference>
<dbReference type="SUPFAM" id="SSF55205">
    <property type="entry name" value="EPT/RTPC-like"/>
    <property type="match status" value="1"/>
</dbReference>
<dbReference type="PROSITE" id="PS00104">
    <property type="entry name" value="EPSP_SYNTHASE_1"/>
    <property type="match status" value="1"/>
</dbReference>
<dbReference type="PROSITE" id="PS00885">
    <property type="entry name" value="EPSP_SYNTHASE_2"/>
    <property type="match status" value="1"/>
</dbReference>
<proteinExistence type="inferred from homology"/>
<comment type="function">
    <text evidence="1">Catalyzes the transfer of the enolpyruvyl moiety of phosphoenolpyruvate (PEP) to the 5-hydroxyl of shikimate-3-phosphate (S3P) to produce enolpyruvyl shikimate-3-phosphate and inorganic phosphate.</text>
</comment>
<comment type="catalytic activity">
    <reaction evidence="1">
        <text>3-phosphoshikimate + phosphoenolpyruvate = 5-O-(1-carboxyvinyl)-3-phosphoshikimate + phosphate</text>
        <dbReference type="Rhea" id="RHEA:21256"/>
        <dbReference type="ChEBI" id="CHEBI:43474"/>
        <dbReference type="ChEBI" id="CHEBI:57701"/>
        <dbReference type="ChEBI" id="CHEBI:58702"/>
        <dbReference type="ChEBI" id="CHEBI:145989"/>
        <dbReference type="EC" id="2.5.1.19"/>
    </reaction>
    <physiologicalReaction direction="left-to-right" evidence="1">
        <dbReference type="Rhea" id="RHEA:21257"/>
    </physiologicalReaction>
</comment>
<comment type="pathway">
    <text evidence="1">Metabolic intermediate biosynthesis; chorismate biosynthesis; chorismate from D-erythrose 4-phosphate and phosphoenolpyruvate: step 6/7.</text>
</comment>
<comment type="subunit">
    <text evidence="1">Monomer.</text>
</comment>
<comment type="subcellular location">
    <subcellularLocation>
        <location evidence="1">Cytoplasm</location>
    </subcellularLocation>
</comment>
<comment type="similarity">
    <text evidence="1">Belongs to the EPSP synthase family.</text>
</comment>
<protein>
    <recommendedName>
        <fullName evidence="1">3-phosphoshikimate 1-carboxyvinyltransferase</fullName>
        <ecNumber evidence="1">2.5.1.19</ecNumber>
    </recommendedName>
    <alternativeName>
        <fullName evidence="1">5-enolpyruvylshikimate-3-phosphate synthase</fullName>
        <shortName evidence="1">EPSP synthase</shortName>
        <shortName evidence="1">EPSPS</shortName>
    </alternativeName>
</protein>
<sequence>MEQLLLQPIAKVDGEINLPGSKSLSNRALLLAALAQGTTTLTNLLDSDDIRHMLNALKKLGVNYQLSKDKKQCVVEGLGRAFNTAESGLLELFLGNAGTAMRPLCAALCLGQGEYILTGEARMFERPIGSLVDALQQAGAQVTYLENENYPPLKIKGTGLKGGKIKIDGSVSSQFLTAFLMAAPMAMEDTEIEIVGELVSKPYIKITLQIMHDFGIDVDNHNFERFIIKGKQTYSAPGHYLVEGDASSASYFLAAGAIAGGCIKVTGIGKKSVQGDIQFADALEAMGAKIEWGDDYIKASKGELKAIDMDMNHIPDAAMTIAVAALFATGTTKIRNVYNWRVKETDRLYAMATELRKVGATVVEGHDFIEVTAPEKLIHAEIDTYDDHRMAMCFSLVALGNTQVTINDPKCTSKTFPDYFEKLASVSC</sequence>
<organism>
    <name type="scientific">Psychromonas ingrahamii (strain DSM 17664 / CCUG 51855 / 37)</name>
    <dbReference type="NCBI Taxonomy" id="357804"/>
    <lineage>
        <taxon>Bacteria</taxon>
        <taxon>Pseudomonadati</taxon>
        <taxon>Pseudomonadota</taxon>
        <taxon>Gammaproteobacteria</taxon>
        <taxon>Alteromonadales</taxon>
        <taxon>Psychromonadaceae</taxon>
        <taxon>Psychromonas</taxon>
    </lineage>
</organism>
<accession>A1STZ0</accession>
<feature type="chain" id="PRO_1000012462" description="3-phosphoshikimate 1-carboxyvinyltransferase">
    <location>
        <begin position="1"/>
        <end position="428"/>
    </location>
</feature>
<feature type="active site" description="Proton acceptor" evidence="1">
    <location>
        <position position="316"/>
    </location>
</feature>
<feature type="binding site" evidence="1">
    <location>
        <position position="22"/>
    </location>
    <ligand>
        <name>3-phosphoshikimate</name>
        <dbReference type="ChEBI" id="CHEBI:145989"/>
    </ligand>
</feature>
<feature type="binding site" evidence="1">
    <location>
        <position position="22"/>
    </location>
    <ligand>
        <name>phosphoenolpyruvate</name>
        <dbReference type="ChEBI" id="CHEBI:58702"/>
    </ligand>
</feature>
<feature type="binding site" evidence="1">
    <location>
        <position position="23"/>
    </location>
    <ligand>
        <name>3-phosphoshikimate</name>
        <dbReference type="ChEBI" id="CHEBI:145989"/>
    </ligand>
</feature>
<feature type="binding site" evidence="1">
    <location>
        <position position="27"/>
    </location>
    <ligand>
        <name>3-phosphoshikimate</name>
        <dbReference type="ChEBI" id="CHEBI:145989"/>
    </ligand>
</feature>
<feature type="binding site" evidence="1">
    <location>
        <position position="98"/>
    </location>
    <ligand>
        <name>phosphoenolpyruvate</name>
        <dbReference type="ChEBI" id="CHEBI:58702"/>
    </ligand>
</feature>
<feature type="binding site" evidence="1">
    <location>
        <position position="126"/>
    </location>
    <ligand>
        <name>phosphoenolpyruvate</name>
        <dbReference type="ChEBI" id="CHEBI:58702"/>
    </ligand>
</feature>
<feature type="binding site" evidence="1">
    <location>
        <position position="172"/>
    </location>
    <ligand>
        <name>3-phosphoshikimate</name>
        <dbReference type="ChEBI" id="CHEBI:145989"/>
    </ligand>
</feature>
<feature type="binding site" evidence="1">
    <location>
        <position position="173"/>
    </location>
    <ligand>
        <name>3-phosphoshikimate</name>
        <dbReference type="ChEBI" id="CHEBI:145989"/>
    </ligand>
</feature>
<feature type="binding site" evidence="1">
    <location>
        <position position="174"/>
    </location>
    <ligand>
        <name>3-phosphoshikimate</name>
        <dbReference type="ChEBI" id="CHEBI:145989"/>
    </ligand>
</feature>
<feature type="binding site" evidence="1">
    <location>
        <position position="174"/>
    </location>
    <ligand>
        <name>phosphoenolpyruvate</name>
        <dbReference type="ChEBI" id="CHEBI:58702"/>
    </ligand>
</feature>
<feature type="binding site" evidence="1">
    <location>
        <position position="200"/>
    </location>
    <ligand>
        <name>3-phosphoshikimate</name>
        <dbReference type="ChEBI" id="CHEBI:145989"/>
    </ligand>
</feature>
<feature type="binding site" evidence="1">
    <location>
        <position position="316"/>
    </location>
    <ligand>
        <name>3-phosphoshikimate</name>
        <dbReference type="ChEBI" id="CHEBI:145989"/>
    </ligand>
</feature>
<feature type="binding site" evidence="1">
    <location>
        <position position="339"/>
    </location>
    <ligand>
        <name>3-phosphoshikimate</name>
        <dbReference type="ChEBI" id="CHEBI:145989"/>
    </ligand>
</feature>
<feature type="binding site" evidence="1">
    <location>
        <position position="343"/>
    </location>
    <ligand>
        <name>3-phosphoshikimate</name>
        <dbReference type="ChEBI" id="CHEBI:145989"/>
    </ligand>
</feature>
<feature type="binding site" evidence="1">
    <location>
        <position position="347"/>
    </location>
    <ligand>
        <name>phosphoenolpyruvate</name>
        <dbReference type="ChEBI" id="CHEBI:58702"/>
    </ligand>
</feature>
<feature type="binding site" evidence="1">
    <location>
        <position position="389"/>
    </location>
    <ligand>
        <name>phosphoenolpyruvate</name>
        <dbReference type="ChEBI" id="CHEBI:58702"/>
    </ligand>
</feature>
<feature type="binding site" evidence="1">
    <location>
        <position position="414"/>
    </location>
    <ligand>
        <name>phosphoenolpyruvate</name>
        <dbReference type="ChEBI" id="CHEBI:58702"/>
    </ligand>
</feature>